<feature type="chain" id="PRO_1000021702" description="Adenylate kinase">
    <location>
        <begin position="1"/>
        <end position="192"/>
    </location>
</feature>
<feature type="binding site" evidence="1">
    <location>
        <begin position="10"/>
        <end position="18"/>
    </location>
    <ligand>
        <name>ATP</name>
        <dbReference type="ChEBI" id="CHEBI:30616"/>
    </ligand>
</feature>
<proteinExistence type="inferred from homology"/>
<sequence>MLGKKVVVTGVPGVGKTTVINGAMERLATEGVAYKAVNFGTFMFEVAKKENLASDRDEMRKLEKDVQKRLQQAAATGIAAMSGEANIIIDTHSTVKTPTGFLAGLPEWVLRELMPDIVVLVETDPDQILMRRLGDASRARDMEGYRAIAEHQEFNRAVSAAYAMYTGCTIKIVRNENFLLEQGIDDLVSVLR</sequence>
<accession>A3CT21</accession>
<dbReference type="EC" id="2.7.4.3" evidence="1"/>
<dbReference type="EMBL" id="CP000562">
    <property type="protein sequence ID" value="ABN56521.1"/>
    <property type="molecule type" value="Genomic_DNA"/>
</dbReference>
<dbReference type="RefSeq" id="WP_011843431.1">
    <property type="nucleotide sequence ID" value="NC_009051.1"/>
</dbReference>
<dbReference type="SMR" id="A3CT21"/>
<dbReference type="STRING" id="368407.Memar_0588"/>
<dbReference type="GeneID" id="4846523"/>
<dbReference type="KEGG" id="mem:Memar_0588"/>
<dbReference type="eggNOG" id="arCOG01039">
    <property type="taxonomic scope" value="Archaea"/>
</dbReference>
<dbReference type="HOGENOM" id="CLU_119371_0_0_2"/>
<dbReference type="OrthoDB" id="26198at2157"/>
<dbReference type="Proteomes" id="UP000002146">
    <property type="component" value="Chromosome"/>
</dbReference>
<dbReference type="GO" id="GO:0005737">
    <property type="term" value="C:cytoplasm"/>
    <property type="evidence" value="ECO:0007669"/>
    <property type="project" value="UniProtKB-SubCell"/>
</dbReference>
<dbReference type="GO" id="GO:0004017">
    <property type="term" value="F:adenylate kinase activity"/>
    <property type="evidence" value="ECO:0007669"/>
    <property type="project" value="UniProtKB-UniRule"/>
</dbReference>
<dbReference type="GO" id="GO:0005524">
    <property type="term" value="F:ATP binding"/>
    <property type="evidence" value="ECO:0007669"/>
    <property type="project" value="UniProtKB-UniRule"/>
</dbReference>
<dbReference type="Gene3D" id="3.40.50.300">
    <property type="entry name" value="P-loop containing nucleotide triphosphate hydrolases"/>
    <property type="match status" value="1"/>
</dbReference>
<dbReference type="HAMAP" id="MF_00234">
    <property type="entry name" value="Adenylate_kinase_AdkA"/>
    <property type="match status" value="1"/>
</dbReference>
<dbReference type="InterPro" id="IPR023477">
    <property type="entry name" value="Adenylate_kinase_AdkA"/>
</dbReference>
<dbReference type="InterPro" id="IPR027417">
    <property type="entry name" value="P-loop_NTPase"/>
</dbReference>
<dbReference type="NCBIfam" id="NF003122">
    <property type="entry name" value="PRK04040.1"/>
    <property type="match status" value="1"/>
</dbReference>
<dbReference type="Pfam" id="PF13207">
    <property type="entry name" value="AAA_17"/>
    <property type="match status" value="1"/>
</dbReference>
<dbReference type="SUPFAM" id="SSF52540">
    <property type="entry name" value="P-loop containing nucleoside triphosphate hydrolases"/>
    <property type="match status" value="1"/>
</dbReference>
<organism>
    <name type="scientific">Methanoculleus marisnigri (strain ATCC 35101 / DSM 1498 / JR1)</name>
    <dbReference type="NCBI Taxonomy" id="368407"/>
    <lineage>
        <taxon>Archaea</taxon>
        <taxon>Methanobacteriati</taxon>
        <taxon>Methanobacteriota</taxon>
        <taxon>Stenosarchaea group</taxon>
        <taxon>Methanomicrobia</taxon>
        <taxon>Methanomicrobiales</taxon>
        <taxon>Methanomicrobiaceae</taxon>
        <taxon>Methanoculleus</taxon>
    </lineage>
</organism>
<comment type="catalytic activity">
    <reaction evidence="1">
        <text>AMP + ATP = 2 ADP</text>
        <dbReference type="Rhea" id="RHEA:12973"/>
        <dbReference type="ChEBI" id="CHEBI:30616"/>
        <dbReference type="ChEBI" id="CHEBI:456215"/>
        <dbReference type="ChEBI" id="CHEBI:456216"/>
        <dbReference type="EC" id="2.7.4.3"/>
    </reaction>
</comment>
<comment type="subcellular location">
    <subcellularLocation>
        <location evidence="1">Cytoplasm</location>
    </subcellularLocation>
</comment>
<comment type="similarity">
    <text evidence="1">Belongs to the archaeal adenylate kinase family.</text>
</comment>
<name>KADA_METMJ</name>
<keyword id="KW-0067">ATP-binding</keyword>
<keyword id="KW-0963">Cytoplasm</keyword>
<keyword id="KW-0418">Kinase</keyword>
<keyword id="KW-0547">Nucleotide-binding</keyword>
<keyword id="KW-0808">Transferase</keyword>
<reference key="1">
    <citation type="journal article" date="2009" name="Stand. Genomic Sci.">
        <title>Complete genome sequence of Methanoculleus marisnigri Romesser et al. 1981 type strain JR1.</title>
        <authorList>
            <person name="Anderson I.J."/>
            <person name="Sieprawska-Lupa M."/>
            <person name="Lapidus A."/>
            <person name="Nolan M."/>
            <person name="Copeland A."/>
            <person name="Glavina Del Rio T."/>
            <person name="Tice H."/>
            <person name="Dalin E."/>
            <person name="Barry K."/>
            <person name="Saunders E."/>
            <person name="Han C."/>
            <person name="Brettin T."/>
            <person name="Detter J.C."/>
            <person name="Bruce D."/>
            <person name="Mikhailova N."/>
            <person name="Pitluck S."/>
            <person name="Hauser L."/>
            <person name="Land M."/>
            <person name="Lucas S."/>
            <person name="Richardson P."/>
            <person name="Whitman W.B."/>
            <person name="Kyrpides N.C."/>
        </authorList>
    </citation>
    <scope>NUCLEOTIDE SEQUENCE [LARGE SCALE GENOMIC DNA]</scope>
    <source>
        <strain>ATCC 35101 / DSM 1498 / JR1</strain>
    </source>
</reference>
<evidence type="ECO:0000255" key="1">
    <source>
        <dbReference type="HAMAP-Rule" id="MF_00234"/>
    </source>
</evidence>
<protein>
    <recommendedName>
        <fullName evidence="1">Adenylate kinase</fullName>
        <shortName evidence="1">AK</shortName>
        <ecNumber evidence="1">2.7.4.3</ecNumber>
    </recommendedName>
    <alternativeName>
        <fullName evidence="1">ATP-AMP transphosphorylase</fullName>
    </alternativeName>
</protein>
<gene>
    <name evidence="1" type="primary">adkA</name>
    <name type="ordered locus">Memar_0588</name>
</gene>